<evidence type="ECO:0000250" key="1"/>
<evidence type="ECO:0000250" key="2">
    <source>
        <dbReference type="UniProtKB" id="O55042"/>
    </source>
</evidence>
<evidence type="ECO:0000250" key="3">
    <source>
        <dbReference type="UniProtKB" id="P37377"/>
    </source>
</evidence>
<evidence type="ECO:0000250" key="4">
    <source>
        <dbReference type="UniProtKB" id="P37840"/>
    </source>
</evidence>
<evidence type="ECO:0000256" key="5">
    <source>
        <dbReference type="SAM" id="MobiDB-lite"/>
    </source>
</evidence>
<evidence type="ECO:0000305" key="6"/>
<gene>
    <name type="primary">SNCA</name>
</gene>
<name>SYUA_ATEGE</name>
<accession>P61138</accession>
<feature type="chain" id="PRO_0000184018" description="Alpha-synuclein">
    <location>
        <begin position="1"/>
        <end position="140"/>
    </location>
</feature>
<feature type="region of interest" description="Disordered" evidence="5">
    <location>
        <begin position="97"/>
        <end position="140"/>
    </location>
</feature>
<feature type="region of interest" description="Interaction with SERF1A" evidence="4">
    <location>
        <begin position="111"/>
        <end position="140"/>
    </location>
</feature>
<feature type="compositionally biased region" description="Acidic residues" evidence="5">
    <location>
        <begin position="112"/>
        <end position="140"/>
    </location>
</feature>
<feature type="binding site" evidence="1">
    <location>
        <position position="2"/>
    </location>
    <ligand>
        <name>Cu cation</name>
        <dbReference type="ChEBI" id="CHEBI:23378"/>
    </ligand>
</feature>
<feature type="binding site" evidence="1">
    <location>
        <position position="50"/>
    </location>
    <ligand>
        <name>Cu cation</name>
        <dbReference type="ChEBI" id="CHEBI:23378"/>
    </ligand>
</feature>
<feature type="modified residue" description="N-acetylmethionine" evidence="4">
    <location>
        <position position="1"/>
    </location>
</feature>
<feature type="modified residue" description="Phosphotyrosine; by FYN" evidence="4">
    <location>
        <position position="125"/>
    </location>
</feature>
<feature type="modified residue" description="Phosphoserine; by PLK2" evidence="4">
    <location>
        <position position="129"/>
    </location>
</feature>
<keyword id="KW-0007">Acetylation</keyword>
<keyword id="KW-0966">Cell projection</keyword>
<keyword id="KW-0186">Copper</keyword>
<keyword id="KW-0963">Cytoplasm</keyword>
<keyword id="KW-0472">Membrane</keyword>
<keyword id="KW-0479">Metal-binding</keyword>
<keyword id="KW-0539">Nucleus</keyword>
<keyword id="KW-0597">Phosphoprotein</keyword>
<keyword id="KW-0677">Repeat</keyword>
<keyword id="KW-0964">Secreted</keyword>
<keyword id="KW-0770">Synapse</keyword>
<keyword id="KW-0832">Ubl conjugation</keyword>
<dbReference type="EMBL" id="AY362339">
    <property type="protein sequence ID" value="AAQ85076.1"/>
    <property type="molecule type" value="Genomic_DNA"/>
</dbReference>
<dbReference type="EMBL" id="AY362335">
    <property type="protein sequence ID" value="AAQ85076.1"/>
    <property type="status" value="JOINED"/>
    <property type="molecule type" value="Genomic_DNA"/>
</dbReference>
<dbReference type="EMBL" id="AY362336">
    <property type="protein sequence ID" value="AAQ85076.1"/>
    <property type="status" value="JOINED"/>
    <property type="molecule type" value="Genomic_DNA"/>
</dbReference>
<dbReference type="EMBL" id="AY362337">
    <property type="protein sequence ID" value="AAQ85076.1"/>
    <property type="status" value="JOINED"/>
    <property type="molecule type" value="Genomic_DNA"/>
</dbReference>
<dbReference type="EMBL" id="AY362338">
    <property type="protein sequence ID" value="AAQ85076.1"/>
    <property type="status" value="JOINED"/>
    <property type="molecule type" value="Genomic_DNA"/>
</dbReference>
<dbReference type="BMRB" id="P61138"/>
<dbReference type="OrthoDB" id="9900372at2759"/>
<dbReference type="GO" id="GO:0043679">
    <property type="term" value="C:axon terminus"/>
    <property type="evidence" value="ECO:0007669"/>
    <property type="project" value="TreeGrafter"/>
</dbReference>
<dbReference type="GO" id="GO:0005829">
    <property type="term" value="C:cytosol"/>
    <property type="evidence" value="ECO:0000250"/>
    <property type="project" value="UniProtKB"/>
</dbReference>
<dbReference type="GO" id="GO:0005615">
    <property type="term" value="C:extracellular space"/>
    <property type="evidence" value="ECO:0000250"/>
    <property type="project" value="UniProtKB"/>
</dbReference>
<dbReference type="GO" id="GO:0016020">
    <property type="term" value="C:membrane"/>
    <property type="evidence" value="ECO:0000250"/>
    <property type="project" value="UniProtKB"/>
</dbReference>
<dbReference type="GO" id="GO:0043025">
    <property type="term" value="C:neuronal cell body"/>
    <property type="evidence" value="ECO:0007669"/>
    <property type="project" value="TreeGrafter"/>
</dbReference>
<dbReference type="GO" id="GO:0005634">
    <property type="term" value="C:nucleus"/>
    <property type="evidence" value="ECO:0000250"/>
    <property type="project" value="UniProtKB"/>
</dbReference>
<dbReference type="GO" id="GO:0005507">
    <property type="term" value="F:copper ion binding"/>
    <property type="evidence" value="ECO:0000250"/>
    <property type="project" value="UniProtKB"/>
</dbReference>
<dbReference type="GO" id="GO:1903136">
    <property type="term" value="F:cuprous ion binding"/>
    <property type="evidence" value="ECO:0007669"/>
    <property type="project" value="TreeGrafter"/>
</dbReference>
<dbReference type="GO" id="GO:0042802">
    <property type="term" value="F:identical protein binding"/>
    <property type="evidence" value="ECO:0000250"/>
    <property type="project" value="UniProtKB"/>
</dbReference>
<dbReference type="GO" id="GO:0007268">
    <property type="term" value="P:chemical synaptic transmission"/>
    <property type="evidence" value="ECO:0007669"/>
    <property type="project" value="TreeGrafter"/>
</dbReference>
<dbReference type="GO" id="GO:0014059">
    <property type="term" value="P:regulation of dopamine secretion"/>
    <property type="evidence" value="ECO:0007669"/>
    <property type="project" value="InterPro"/>
</dbReference>
<dbReference type="GO" id="GO:0050808">
    <property type="term" value="P:synapse organization"/>
    <property type="evidence" value="ECO:0007669"/>
    <property type="project" value="TreeGrafter"/>
</dbReference>
<dbReference type="GO" id="GO:0048488">
    <property type="term" value="P:synaptic vesicle endocytosis"/>
    <property type="evidence" value="ECO:0007669"/>
    <property type="project" value="TreeGrafter"/>
</dbReference>
<dbReference type="FunFam" id="1.10.287.700:FF:000001">
    <property type="entry name" value="Alpha-synuclein"/>
    <property type="match status" value="1"/>
</dbReference>
<dbReference type="Gene3D" id="1.10.287.700">
    <property type="entry name" value="Helix hairpin bin"/>
    <property type="match status" value="1"/>
</dbReference>
<dbReference type="InterPro" id="IPR001058">
    <property type="entry name" value="Synuclein"/>
</dbReference>
<dbReference type="InterPro" id="IPR002460">
    <property type="entry name" value="Synuclein_alpha"/>
</dbReference>
<dbReference type="PANTHER" id="PTHR13820:SF5">
    <property type="entry name" value="ALPHA-SYNUCLEIN"/>
    <property type="match status" value="1"/>
</dbReference>
<dbReference type="PANTHER" id="PTHR13820">
    <property type="entry name" value="SYNUCLEIN"/>
    <property type="match status" value="1"/>
</dbReference>
<dbReference type="Pfam" id="PF01387">
    <property type="entry name" value="Synuclein"/>
    <property type="match status" value="1"/>
</dbReference>
<dbReference type="PRINTS" id="PR01212">
    <property type="entry name" value="ASYNUCLEIN"/>
</dbReference>
<dbReference type="PRINTS" id="PR01211">
    <property type="entry name" value="SYNUCLEIN"/>
</dbReference>
<dbReference type="SUPFAM" id="SSF118375">
    <property type="entry name" value="Synuclein"/>
    <property type="match status" value="1"/>
</dbReference>
<comment type="function">
    <text evidence="4">Neuronal protein that plays several roles in synaptic activity such as regulation of synaptic vesicle trafficking and subsequent neurotransmitter release (By similarity). Participates as a monomer in synaptic vesicle exocytosis by enhancing vesicle priming, fusion and dilation of exocytotic fusion pores (By similarity). Mechanistically, acts by increasing local Ca(2+) release from microdomains which is essential for the enhancement of ATP-induced exocytosis (By similarity). Also acts as a molecular chaperone in its multimeric membrane-bound state, assisting in the folding of synaptic fusion components called SNAREs (Soluble NSF Attachment Protein REceptors) at presynaptic plasma membrane in conjunction with cysteine string protein-alpha/DNAJC5 (By similarity). This chaperone activity is important to sustain normal SNARE-complex assembly during aging (By similarity). Also plays a role in the regulation of the dopamine neurotransmission by associating with the dopamine transporter (DAT1) and thereby modulating its activity (By similarity).</text>
</comment>
<comment type="subunit">
    <text evidence="2 4">Soluble monomer. Homotetramer. A dynamic intracellular population of tetramers and monomers coexists normally and the tetramer plays an essential role in maintaining homeostasis (By similarity). Interacts with UCHL1 (By similarity). Interacts with phospholipase D and histones. Interacts (via N-terminus) with synphilin-1/SNCAIP; this interaction promotes formation of SNCA inclusions in the cytoplasm. Interacts with CALM1. Interacts with STXBP1; this interaction controls SNCA self-replicating aggregation. Interacts with SNARE components VAMP2 and SNAP25; these interactions allows SNARE complex assembly and integrity (By similarity). Interacts with RPH3A and RAB3A (By similarity). Interacts with SERF1A; this interaction promotes the aggregation of SNCA (By similarity). Interacts with SEPTIN4 (By similarity). Interacts with DDX10; this interaction causes DDX10 mislocalization to the nucleoplasm and cytoplasmic inclusions (By similarity).</text>
</comment>
<comment type="subcellular location">
    <subcellularLocation>
        <location evidence="4">Cytoplasm</location>
        <location evidence="4">Cytosol</location>
    </subcellularLocation>
    <subcellularLocation>
        <location evidence="4">Membrane</location>
    </subcellularLocation>
    <subcellularLocation>
        <location evidence="4">Nucleus</location>
    </subcellularLocation>
    <subcellularLocation>
        <location evidence="4">Synapse</location>
    </subcellularLocation>
    <subcellularLocation>
        <location evidence="4">Secreted</location>
    </subcellularLocation>
    <subcellularLocation>
        <location evidence="2">Cell projection</location>
        <location evidence="2">Axon</location>
    </subcellularLocation>
    <text evidence="2 4">Membrane-bound in dopaminergic neurons (By similarity). Expressed and colocalized with SEPTIN4 in dopaminergic axon terminals, especially at the varicosities (By similarity).</text>
</comment>
<comment type="PTM">
    <text evidence="4">Phosphorylated, predominantly on serine residues (By similarity). Phosphorylated on Tyr-125 upon osmotic stress (By similarity).</text>
</comment>
<comment type="PTM">
    <text evidence="3">Ubiquitinated. The predominant conjugate is the diubiquitinated form.</text>
</comment>
<comment type="PTM">
    <text evidence="4">Acetylation at Met-1 seems to be important for proper folding and native oligomeric structure.</text>
</comment>
<comment type="similarity">
    <text evidence="6">Belongs to the synuclein family.</text>
</comment>
<proteinExistence type="inferred from homology"/>
<organism>
    <name type="scientific">Ateles geoffroyi</name>
    <name type="common">Black-handed spider monkey</name>
    <name type="synonym">Geoffroy's spider monkey</name>
    <dbReference type="NCBI Taxonomy" id="9509"/>
    <lineage>
        <taxon>Eukaryota</taxon>
        <taxon>Metazoa</taxon>
        <taxon>Chordata</taxon>
        <taxon>Craniata</taxon>
        <taxon>Vertebrata</taxon>
        <taxon>Euteleostomi</taxon>
        <taxon>Mammalia</taxon>
        <taxon>Eutheria</taxon>
        <taxon>Euarchontoglires</taxon>
        <taxon>Primates</taxon>
        <taxon>Haplorrhini</taxon>
        <taxon>Platyrrhini</taxon>
        <taxon>Atelidae</taxon>
        <taxon>Atelinae</taxon>
        <taxon>Ateles</taxon>
    </lineage>
</organism>
<sequence>MDVFMKGLSKAKEGVVAAAEKTKQGVAEAAGKTKEGVLYVGSKTKEGVVHGVTTVAEKTKEQVTSVGGAVVTGVTAVAQKTVEGAGNIAAATGFVKKDHSGKSEEGAPQEGILEDMPVDPDNEAYEMPSEEGYQDYEPEA</sequence>
<reference key="1">
    <citation type="journal article" date="2004" name="Genomics">
        <title>Alpha-synuclein A53T substitution associated with Parkinson disease also marks the divergence of Old World and New World primates.</title>
        <authorList>
            <person name="Hamilton B.A."/>
        </authorList>
    </citation>
    <scope>NUCLEOTIDE SEQUENCE [GENOMIC DNA]</scope>
</reference>
<protein>
    <recommendedName>
        <fullName>Alpha-synuclein</fullName>
    </recommendedName>
</protein>